<proteinExistence type="inferred from homology"/>
<reference key="1">
    <citation type="journal article" date="1992" name="Eur. J. Biochem.">
        <title>The polygalacturonases of Aspergillus niger are encoded by a family of diverged genes.</title>
        <authorList>
            <person name="Bussink H.J.D."/>
            <person name="Buxton F.P."/>
            <person name="Fraaye B.A."/>
            <person name="de Graaff L.H."/>
            <person name="Visser J."/>
        </authorList>
    </citation>
    <scope>NUCLEOTIDE SEQUENCE [GENOMIC DNA]</scope>
    <source>
        <strain>ATCC 9029 / NRRL 3 / CBS 120.49 / DSM 2466 / N400 / FGSC 732</strain>
    </source>
</reference>
<protein>
    <recommendedName>
        <fullName>Probable endopolygalacturonase C</fullName>
        <shortName>PGC</shortName>
        <ecNumber>3.2.1.15</ecNumber>
    </recommendedName>
    <alternativeName>
        <fullName>Pectinase 3</fullName>
    </alternativeName>
    <alternativeName>
        <fullName>Pectinase C</fullName>
    </alternativeName>
    <alternativeName>
        <fullName>Polygalacturonase C</fullName>
    </alternativeName>
    <alternativeName>
        <fullName>Polygalacturonase III</fullName>
        <shortName>PG-III</shortName>
    </alternativeName>
</protein>
<gene>
    <name type="primary">pgaC</name>
</gene>
<sequence length="383" mass="40502">MVRQLILISSLLAAVAVRAPADPAHPMVTEAPDVNLVEKRATTCTFSGSEGASKASKSKTSCSTIYLSDVAVPSGTTLDLSDLNDGTHVIFQGETTFGYEEWEGPLVRVSGTDITVEGESDAVLNGDGSRWWDGEGGNGGKTKPKFFYAHDLTSSTIKSIYIENSPVQVFSIDGSTDLTMTDITVDNTDGDTDDLAANTDGFDIGESTYITITGAEIYNQDDCVAINSGENIYFSASVCSGGHGLSIGSVGGRDDNTVKNVTFYDVNVLKSQQAIRIKTIYGDTGSVSEVTYHEIAFSDATDYGIVIEQNYDDTSKTPTTGVPITDFVLENIVGTCEDDDCTEVYIACGDGSCSDWTWTGVSVTGGSVSDDCLNVPSGISCDL</sequence>
<organism>
    <name type="scientific">Aspergillus niger</name>
    <dbReference type="NCBI Taxonomy" id="5061"/>
    <lineage>
        <taxon>Eukaryota</taxon>
        <taxon>Fungi</taxon>
        <taxon>Dikarya</taxon>
        <taxon>Ascomycota</taxon>
        <taxon>Pezizomycotina</taxon>
        <taxon>Eurotiomycetes</taxon>
        <taxon>Eurotiomycetidae</taxon>
        <taxon>Eurotiales</taxon>
        <taxon>Aspergillaceae</taxon>
        <taxon>Aspergillus</taxon>
        <taxon>Aspergillus subgen. Circumdati</taxon>
    </lineage>
</organism>
<dbReference type="EC" id="3.2.1.15"/>
<dbReference type="EMBL" id="X64356">
    <property type="protein sequence ID" value="CAA45707.1"/>
    <property type="molecule type" value="Genomic_DNA"/>
</dbReference>
<dbReference type="SMR" id="Q12554"/>
<dbReference type="CAZy" id="GH28">
    <property type="family name" value="Glycoside Hydrolase Family 28"/>
</dbReference>
<dbReference type="GlyCosmos" id="Q12554">
    <property type="glycosylation" value="1 site, No reported glycans"/>
</dbReference>
<dbReference type="PaxDb" id="5061-CADANGAP00004890"/>
<dbReference type="VEuPathDB" id="FungiDB:An05g02440"/>
<dbReference type="VEuPathDB" id="FungiDB:ASPNIDRAFT2_1084547"/>
<dbReference type="VEuPathDB" id="FungiDB:ATCC64974_42870"/>
<dbReference type="VEuPathDB" id="FungiDB:M747DRAFT_362259"/>
<dbReference type="eggNOG" id="ENOG502SHCC">
    <property type="taxonomic scope" value="Eukaryota"/>
</dbReference>
<dbReference type="GO" id="GO:0005576">
    <property type="term" value="C:extracellular region"/>
    <property type="evidence" value="ECO:0007669"/>
    <property type="project" value="UniProtKB-SubCell"/>
</dbReference>
<dbReference type="GO" id="GO:0004650">
    <property type="term" value="F:polygalacturonase activity"/>
    <property type="evidence" value="ECO:0007669"/>
    <property type="project" value="UniProtKB-EC"/>
</dbReference>
<dbReference type="GO" id="GO:0071555">
    <property type="term" value="P:cell wall organization"/>
    <property type="evidence" value="ECO:0007669"/>
    <property type="project" value="UniProtKB-KW"/>
</dbReference>
<dbReference type="GO" id="GO:0045490">
    <property type="term" value="P:pectin catabolic process"/>
    <property type="evidence" value="ECO:0007669"/>
    <property type="project" value="UniProtKB-ARBA"/>
</dbReference>
<dbReference type="FunFam" id="2.160.20.10:FF:000002">
    <property type="entry name" value="Endopolygalacturonase D"/>
    <property type="match status" value="1"/>
</dbReference>
<dbReference type="Gene3D" id="2.160.20.10">
    <property type="entry name" value="Single-stranded right-handed beta-helix, Pectin lyase-like"/>
    <property type="match status" value="1"/>
</dbReference>
<dbReference type="InterPro" id="IPR000743">
    <property type="entry name" value="Glyco_hydro_28"/>
</dbReference>
<dbReference type="InterPro" id="IPR050434">
    <property type="entry name" value="Glycosyl_hydrlase_28"/>
</dbReference>
<dbReference type="InterPro" id="IPR006626">
    <property type="entry name" value="PbH1"/>
</dbReference>
<dbReference type="InterPro" id="IPR012334">
    <property type="entry name" value="Pectin_lyas_fold"/>
</dbReference>
<dbReference type="InterPro" id="IPR011050">
    <property type="entry name" value="Pectin_lyase_fold/virulence"/>
</dbReference>
<dbReference type="PANTHER" id="PTHR31884">
    <property type="entry name" value="POLYGALACTURONASE"/>
    <property type="match status" value="1"/>
</dbReference>
<dbReference type="PANTHER" id="PTHR31884:SF1">
    <property type="entry name" value="POLYGALACTURONASE"/>
    <property type="match status" value="1"/>
</dbReference>
<dbReference type="Pfam" id="PF00295">
    <property type="entry name" value="Glyco_hydro_28"/>
    <property type="match status" value="1"/>
</dbReference>
<dbReference type="SMART" id="SM00710">
    <property type="entry name" value="PbH1"/>
    <property type="match status" value="4"/>
</dbReference>
<dbReference type="SUPFAM" id="SSF51126">
    <property type="entry name" value="Pectin lyase-like"/>
    <property type="match status" value="1"/>
</dbReference>
<name>PGLRC_ASPNG</name>
<accession>Q12554</accession>
<comment type="function">
    <text evidence="1">Involved in maceration and soft-rotting of plant tissue. Hydrolyzes the 1,4-alpha glycosidic bonds of de-esterified pectate in the smooth region of the plant cell wall (By similarity).</text>
</comment>
<comment type="catalytic activity">
    <reaction>
        <text>(1,4-alpha-D-galacturonosyl)n+m + H2O = (1,4-alpha-D-galacturonosyl)n + (1,4-alpha-D-galacturonosyl)m.</text>
        <dbReference type="EC" id="3.2.1.15"/>
    </reaction>
</comment>
<comment type="subcellular location">
    <subcellularLocation>
        <location evidence="3">Secreted</location>
    </subcellularLocation>
</comment>
<comment type="similarity">
    <text evidence="3">Belongs to the glycosyl hydrolase 28 family.</text>
</comment>
<keyword id="KW-0961">Cell wall biogenesis/degradation</keyword>
<keyword id="KW-0165">Cleavage on pair of basic residues</keyword>
<keyword id="KW-1015">Disulfide bond</keyword>
<keyword id="KW-0325">Glycoprotein</keyword>
<keyword id="KW-0326">Glycosidase</keyword>
<keyword id="KW-0378">Hydrolase</keyword>
<keyword id="KW-0677">Repeat</keyword>
<keyword id="KW-0964">Secreted</keyword>
<keyword id="KW-0732">Signal</keyword>
<keyword id="KW-0865">Zymogen</keyword>
<evidence type="ECO:0000250" key="1"/>
<evidence type="ECO:0000255" key="2"/>
<evidence type="ECO:0000305" key="3"/>
<feature type="signal peptide" evidence="2">
    <location>
        <begin position="1"/>
        <end position="16"/>
    </location>
</feature>
<feature type="propeptide" id="PRO_0000024772" evidence="2">
    <location>
        <begin position="17"/>
        <end position="40"/>
    </location>
</feature>
<feature type="chain" id="PRO_0000024773" description="Probable endopolygalacturonase C">
    <location>
        <begin position="41"/>
        <end position="383"/>
    </location>
</feature>
<feature type="repeat" description="PbH1 1">
    <location>
        <begin position="175"/>
        <end position="206"/>
    </location>
</feature>
<feature type="repeat" description="PbH1 2">
    <location>
        <begin position="207"/>
        <end position="228"/>
    </location>
</feature>
<feature type="repeat" description="PbH1 3">
    <location>
        <begin position="253"/>
        <end position="279"/>
    </location>
</feature>
<feature type="repeat" description="PbH1 4">
    <location>
        <begin position="287"/>
        <end position="309"/>
    </location>
</feature>
<feature type="active site" description="Proton donor" evidence="1">
    <location>
        <position position="221"/>
    </location>
</feature>
<feature type="active site" evidence="1">
    <location>
        <position position="243"/>
    </location>
</feature>
<feature type="glycosylation site" description="N-linked (GlcNAc...) asparagine" evidence="2">
    <location>
        <position position="260"/>
    </location>
</feature>
<feature type="disulfide bond" evidence="1">
    <location>
        <begin position="44"/>
        <end position="62"/>
    </location>
</feature>
<feature type="disulfide bond" evidence="1">
    <location>
        <begin position="223"/>
        <end position="239"/>
    </location>
</feature>
<feature type="disulfide bond" evidence="1">
    <location>
        <begin position="348"/>
        <end position="353"/>
    </location>
</feature>
<feature type="disulfide bond" evidence="1">
    <location>
        <begin position="372"/>
        <end position="381"/>
    </location>
</feature>